<sequence>MPLDEFEFSVLKTIQTHHLIFPGHKVLVALSGGMDSMSLLNILLKLRQKLNCEIFAAHLNHMIRENAIRDEQFVYSYCKKAGVKIFVERFDVPKFCADRKIGIEEGARAARYTFLNRIAHENGIDLIALAHNLNDLVETILYRIVRGTGLSGIVCMKLKDENKIRPLLYFKREQIEAYIKRNNIPYVQDETNFNLKYSRNYIRHRIVPALKLLNSDLENAFSQVHFSGMMLENHVKRLIKKYSERIFRCGKRIIFDSKDMDEFEIIELVKYCAGQMNVDLNYRQIQLVVSKLNENSWSIDLSEDIAIKKGFDFFSIEKKCKFMNILKVGKPGVYKFNDWTFELSSEVKSNEYVFIHDQGGVCIRKRKAGEKIAGVKMKDMMIDSKIPAFLRDEMPVVCTIDRIIWVPYVYVDRCFKERKEDSLVLNLLQNPYSCILELRKDERRKMV</sequence>
<keyword id="KW-0067">ATP-binding</keyword>
<keyword id="KW-0963">Cytoplasm</keyword>
<keyword id="KW-0436">Ligase</keyword>
<keyword id="KW-0547">Nucleotide-binding</keyword>
<keyword id="KW-1185">Reference proteome</keyword>
<keyword id="KW-0819">tRNA processing</keyword>
<proteinExistence type="inferred from homology"/>
<gene>
    <name evidence="1" type="primary">tilS</name>
    <name type="ordered locus">Tlet_1536</name>
</gene>
<dbReference type="EC" id="6.3.4.19" evidence="1"/>
<dbReference type="EMBL" id="CP000812">
    <property type="protein sequence ID" value="ABV34092.1"/>
    <property type="molecule type" value="Genomic_DNA"/>
</dbReference>
<dbReference type="RefSeq" id="WP_012003568.1">
    <property type="nucleotide sequence ID" value="NZ_BSDV01000001.1"/>
</dbReference>
<dbReference type="SMR" id="A8F7F8"/>
<dbReference type="STRING" id="416591.Tlet_1536"/>
<dbReference type="KEGG" id="tle:Tlet_1536"/>
<dbReference type="eggNOG" id="COG0037">
    <property type="taxonomic scope" value="Bacteria"/>
</dbReference>
<dbReference type="HOGENOM" id="CLU_018869_0_1_0"/>
<dbReference type="OrthoDB" id="9807403at2"/>
<dbReference type="Proteomes" id="UP000002016">
    <property type="component" value="Chromosome"/>
</dbReference>
<dbReference type="GO" id="GO:0005737">
    <property type="term" value="C:cytoplasm"/>
    <property type="evidence" value="ECO:0007669"/>
    <property type="project" value="UniProtKB-SubCell"/>
</dbReference>
<dbReference type="GO" id="GO:0005524">
    <property type="term" value="F:ATP binding"/>
    <property type="evidence" value="ECO:0007669"/>
    <property type="project" value="UniProtKB-UniRule"/>
</dbReference>
<dbReference type="GO" id="GO:0032267">
    <property type="term" value="F:tRNA(Ile)-lysidine synthase activity"/>
    <property type="evidence" value="ECO:0007669"/>
    <property type="project" value="UniProtKB-EC"/>
</dbReference>
<dbReference type="GO" id="GO:0006400">
    <property type="term" value="P:tRNA modification"/>
    <property type="evidence" value="ECO:0007669"/>
    <property type="project" value="UniProtKB-UniRule"/>
</dbReference>
<dbReference type="CDD" id="cd01992">
    <property type="entry name" value="TilS_N"/>
    <property type="match status" value="1"/>
</dbReference>
<dbReference type="Gene3D" id="3.40.50.620">
    <property type="entry name" value="HUPs"/>
    <property type="match status" value="1"/>
</dbReference>
<dbReference type="HAMAP" id="MF_01161">
    <property type="entry name" value="tRNA_Ile_lys_synt"/>
    <property type="match status" value="1"/>
</dbReference>
<dbReference type="InterPro" id="IPR012796">
    <property type="entry name" value="Lysidine-tRNA-synth_C"/>
</dbReference>
<dbReference type="InterPro" id="IPR014729">
    <property type="entry name" value="Rossmann-like_a/b/a_fold"/>
</dbReference>
<dbReference type="InterPro" id="IPR011063">
    <property type="entry name" value="TilS/TtcA_N"/>
</dbReference>
<dbReference type="InterPro" id="IPR012094">
    <property type="entry name" value="tRNA_Ile_lys_synt"/>
</dbReference>
<dbReference type="InterPro" id="IPR012795">
    <property type="entry name" value="tRNA_Ile_lys_synt_N"/>
</dbReference>
<dbReference type="NCBIfam" id="TIGR02433">
    <property type="entry name" value="lysidine_TilS_C"/>
    <property type="match status" value="1"/>
</dbReference>
<dbReference type="NCBIfam" id="TIGR02432">
    <property type="entry name" value="lysidine_TilS_N"/>
    <property type="match status" value="1"/>
</dbReference>
<dbReference type="PANTHER" id="PTHR43033">
    <property type="entry name" value="TRNA(ILE)-LYSIDINE SYNTHASE-RELATED"/>
    <property type="match status" value="1"/>
</dbReference>
<dbReference type="PANTHER" id="PTHR43033:SF1">
    <property type="entry name" value="TRNA(ILE)-LYSIDINE SYNTHASE-RELATED"/>
    <property type="match status" value="1"/>
</dbReference>
<dbReference type="Pfam" id="PF01171">
    <property type="entry name" value="ATP_bind_3"/>
    <property type="match status" value="1"/>
</dbReference>
<dbReference type="Pfam" id="PF11734">
    <property type="entry name" value="TilS_C"/>
    <property type="match status" value="1"/>
</dbReference>
<dbReference type="SMART" id="SM00977">
    <property type="entry name" value="TilS_C"/>
    <property type="match status" value="1"/>
</dbReference>
<dbReference type="SUPFAM" id="SSF52402">
    <property type="entry name" value="Adenine nucleotide alpha hydrolases-like"/>
    <property type="match status" value="1"/>
</dbReference>
<dbReference type="SUPFAM" id="SSF56037">
    <property type="entry name" value="PheT/TilS domain"/>
    <property type="match status" value="1"/>
</dbReference>
<accession>A8F7F8</accession>
<evidence type="ECO:0000255" key="1">
    <source>
        <dbReference type="HAMAP-Rule" id="MF_01161"/>
    </source>
</evidence>
<reference key="1">
    <citation type="submission" date="2007-08" db="EMBL/GenBank/DDBJ databases">
        <title>Complete sequence of Thermotoga lettingae TMO.</title>
        <authorList>
            <consortium name="US DOE Joint Genome Institute"/>
            <person name="Copeland A."/>
            <person name="Lucas S."/>
            <person name="Lapidus A."/>
            <person name="Barry K."/>
            <person name="Glavina del Rio T."/>
            <person name="Dalin E."/>
            <person name="Tice H."/>
            <person name="Pitluck S."/>
            <person name="Foster B."/>
            <person name="Bruce D."/>
            <person name="Schmutz J."/>
            <person name="Larimer F."/>
            <person name="Land M."/>
            <person name="Hauser L."/>
            <person name="Kyrpides N."/>
            <person name="Mikhailova N."/>
            <person name="Nelson K."/>
            <person name="Gogarten J.P."/>
            <person name="Noll K."/>
            <person name="Richardson P."/>
        </authorList>
    </citation>
    <scope>NUCLEOTIDE SEQUENCE [LARGE SCALE GENOMIC DNA]</scope>
    <source>
        <strain>ATCC BAA-301 / DSM 14385 / NBRC 107922 / TMO</strain>
    </source>
</reference>
<feature type="chain" id="PRO_1000065632" description="tRNA(Ile)-lysidine synthase">
    <location>
        <begin position="1"/>
        <end position="447"/>
    </location>
</feature>
<feature type="binding site" evidence="1">
    <location>
        <begin position="31"/>
        <end position="36"/>
    </location>
    <ligand>
        <name>ATP</name>
        <dbReference type="ChEBI" id="CHEBI:30616"/>
    </ligand>
</feature>
<name>TILS_PSELT</name>
<comment type="function">
    <text evidence="1">Ligates lysine onto the cytidine present at position 34 of the AUA codon-specific tRNA(Ile) that contains the anticodon CAU, in an ATP-dependent manner. Cytidine is converted to lysidine, thus changing the amino acid specificity of the tRNA from methionine to isoleucine.</text>
</comment>
<comment type="catalytic activity">
    <reaction evidence="1">
        <text>cytidine(34) in tRNA(Ile2) + L-lysine + ATP = lysidine(34) in tRNA(Ile2) + AMP + diphosphate + H(+)</text>
        <dbReference type="Rhea" id="RHEA:43744"/>
        <dbReference type="Rhea" id="RHEA-COMP:10625"/>
        <dbReference type="Rhea" id="RHEA-COMP:10670"/>
        <dbReference type="ChEBI" id="CHEBI:15378"/>
        <dbReference type="ChEBI" id="CHEBI:30616"/>
        <dbReference type="ChEBI" id="CHEBI:32551"/>
        <dbReference type="ChEBI" id="CHEBI:33019"/>
        <dbReference type="ChEBI" id="CHEBI:82748"/>
        <dbReference type="ChEBI" id="CHEBI:83665"/>
        <dbReference type="ChEBI" id="CHEBI:456215"/>
        <dbReference type="EC" id="6.3.4.19"/>
    </reaction>
</comment>
<comment type="subcellular location">
    <subcellularLocation>
        <location evidence="1">Cytoplasm</location>
    </subcellularLocation>
</comment>
<comment type="domain">
    <text>The N-terminal region contains the highly conserved SGGXDS motif, predicted to be a P-loop motif involved in ATP binding.</text>
</comment>
<comment type="similarity">
    <text evidence="1">Belongs to the tRNA(Ile)-lysidine synthase family.</text>
</comment>
<organism>
    <name type="scientific">Pseudothermotoga lettingae (strain ATCC BAA-301 / DSM 14385 / NBRC 107922 / TMO)</name>
    <name type="common">Thermotoga lettingae</name>
    <dbReference type="NCBI Taxonomy" id="416591"/>
    <lineage>
        <taxon>Bacteria</taxon>
        <taxon>Thermotogati</taxon>
        <taxon>Thermotogota</taxon>
        <taxon>Thermotogae</taxon>
        <taxon>Thermotogales</taxon>
        <taxon>Thermotogaceae</taxon>
        <taxon>Pseudothermotoga</taxon>
    </lineage>
</organism>
<protein>
    <recommendedName>
        <fullName evidence="1">tRNA(Ile)-lysidine synthase</fullName>
        <ecNumber evidence="1">6.3.4.19</ecNumber>
    </recommendedName>
    <alternativeName>
        <fullName evidence="1">tRNA(Ile)-2-lysyl-cytidine synthase</fullName>
    </alternativeName>
    <alternativeName>
        <fullName evidence="1">tRNA(Ile)-lysidine synthetase</fullName>
    </alternativeName>
</protein>